<reference key="1">
    <citation type="journal article" date="2005" name="Nat. Biotechnol.">
        <title>Complete genome sequence of the acetic acid bacterium Gluconobacter oxydans.</title>
        <authorList>
            <person name="Prust C."/>
            <person name="Hoffmeister M."/>
            <person name="Liesegang H."/>
            <person name="Wiezer A."/>
            <person name="Fricke W.F."/>
            <person name="Ehrenreich A."/>
            <person name="Gottschalk G."/>
            <person name="Deppenmeier U."/>
        </authorList>
    </citation>
    <scope>NUCLEOTIDE SEQUENCE [LARGE SCALE GENOMIC DNA]</scope>
    <source>
        <strain>621H</strain>
    </source>
</reference>
<protein>
    <recommendedName>
        <fullName evidence="1">Peptide chain release factor 1</fullName>
        <shortName evidence="1">RF-1</shortName>
    </recommendedName>
</protein>
<sequence>MAFDDRLERIVARSEEVQALMSSGELTGEDFTRLSQEYAELEPVVASIQAWKSAEEQKAGAQALLDDPEMRELAQMELAEIEATLPDLQHALRLALLPKDAADERSAILEIRPAAGGDEAGLFAAELFDAYRRFSEQNGWRFEVMEYAENEVAGLKEGMATISGRSVFARLKYESGVHRVQRVPATESQGRIHTSTVTVAVLPEAEEVDVTVNDDDLRIDVYRASGAGGQHVNKTESAVRVTHMPSGIVVAMQEEKSQHKNKAKAMKILRARLYERERAQLHATRAADRKSQVGTGDRSERIRTYNFPQGRVTDHRINLTLYKIDRIMGGEFDEIIDALTREEQTELLAAEGF</sequence>
<gene>
    <name evidence="1" type="primary">prfA</name>
    <name type="ordered locus">GOX0032</name>
</gene>
<evidence type="ECO:0000255" key="1">
    <source>
        <dbReference type="HAMAP-Rule" id="MF_00093"/>
    </source>
</evidence>
<name>RF1_GLUOX</name>
<keyword id="KW-0963">Cytoplasm</keyword>
<keyword id="KW-0488">Methylation</keyword>
<keyword id="KW-0648">Protein biosynthesis</keyword>
<keyword id="KW-1185">Reference proteome</keyword>
<proteinExistence type="inferred from homology"/>
<comment type="function">
    <text evidence="1">Peptide chain release factor 1 directs the termination of translation in response to the peptide chain termination codons UAG and UAA.</text>
</comment>
<comment type="subcellular location">
    <subcellularLocation>
        <location evidence="1">Cytoplasm</location>
    </subcellularLocation>
</comment>
<comment type="PTM">
    <text evidence="1">Methylated by PrmC. Methylation increases the termination efficiency of RF1.</text>
</comment>
<comment type="similarity">
    <text evidence="1">Belongs to the prokaryotic/mitochondrial release factor family.</text>
</comment>
<accession>Q5FUR9</accession>
<dbReference type="EMBL" id="CP000009">
    <property type="protein sequence ID" value="AAW59830.1"/>
    <property type="molecule type" value="Genomic_DNA"/>
</dbReference>
<dbReference type="RefSeq" id="WP_011251634.1">
    <property type="nucleotide sequence ID" value="NC_006677.1"/>
</dbReference>
<dbReference type="SMR" id="Q5FUR9"/>
<dbReference type="STRING" id="290633.GOX0032"/>
<dbReference type="KEGG" id="gox:GOX0032"/>
<dbReference type="eggNOG" id="COG0216">
    <property type="taxonomic scope" value="Bacteria"/>
</dbReference>
<dbReference type="HOGENOM" id="CLU_036856_0_1_5"/>
<dbReference type="Proteomes" id="UP000006375">
    <property type="component" value="Chromosome"/>
</dbReference>
<dbReference type="GO" id="GO:0005737">
    <property type="term" value="C:cytoplasm"/>
    <property type="evidence" value="ECO:0007669"/>
    <property type="project" value="UniProtKB-SubCell"/>
</dbReference>
<dbReference type="GO" id="GO:0016149">
    <property type="term" value="F:translation release factor activity, codon specific"/>
    <property type="evidence" value="ECO:0007669"/>
    <property type="project" value="UniProtKB-UniRule"/>
</dbReference>
<dbReference type="FunFam" id="3.30.160.20:FF:000004">
    <property type="entry name" value="Peptide chain release factor 1"/>
    <property type="match status" value="1"/>
</dbReference>
<dbReference type="FunFam" id="3.30.70.1660:FF:000002">
    <property type="entry name" value="Peptide chain release factor 1"/>
    <property type="match status" value="1"/>
</dbReference>
<dbReference type="FunFam" id="3.30.70.1660:FF:000004">
    <property type="entry name" value="Peptide chain release factor 1"/>
    <property type="match status" value="1"/>
</dbReference>
<dbReference type="Gene3D" id="3.30.160.20">
    <property type="match status" value="1"/>
</dbReference>
<dbReference type="Gene3D" id="3.30.70.1660">
    <property type="match status" value="2"/>
</dbReference>
<dbReference type="Gene3D" id="6.10.140.1950">
    <property type="match status" value="1"/>
</dbReference>
<dbReference type="HAMAP" id="MF_00093">
    <property type="entry name" value="Rel_fac_1"/>
    <property type="match status" value="1"/>
</dbReference>
<dbReference type="InterPro" id="IPR005139">
    <property type="entry name" value="PCRF"/>
</dbReference>
<dbReference type="InterPro" id="IPR000352">
    <property type="entry name" value="Pep_chain_release_fac_I"/>
</dbReference>
<dbReference type="InterPro" id="IPR045853">
    <property type="entry name" value="Pep_chain_release_fac_I_sf"/>
</dbReference>
<dbReference type="InterPro" id="IPR050057">
    <property type="entry name" value="Prokaryotic/Mito_RF"/>
</dbReference>
<dbReference type="InterPro" id="IPR004373">
    <property type="entry name" value="RF-1"/>
</dbReference>
<dbReference type="NCBIfam" id="TIGR00019">
    <property type="entry name" value="prfA"/>
    <property type="match status" value="1"/>
</dbReference>
<dbReference type="NCBIfam" id="NF001859">
    <property type="entry name" value="PRK00591.1"/>
    <property type="match status" value="1"/>
</dbReference>
<dbReference type="PANTHER" id="PTHR43804">
    <property type="entry name" value="LD18447P"/>
    <property type="match status" value="1"/>
</dbReference>
<dbReference type="PANTHER" id="PTHR43804:SF7">
    <property type="entry name" value="LD18447P"/>
    <property type="match status" value="1"/>
</dbReference>
<dbReference type="Pfam" id="PF03462">
    <property type="entry name" value="PCRF"/>
    <property type="match status" value="1"/>
</dbReference>
<dbReference type="Pfam" id="PF00472">
    <property type="entry name" value="RF-1"/>
    <property type="match status" value="1"/>
</dbReference>
<dbReference type="SMART" id="SM00937">
    <property type="entry name" value="PCRF"/>
    <property type="match status" value="1"/>
</dbReference>
<dbReference type="SUPFAM" id="SSF75620">
    <property type="entry name" value="Release factor"/>
    <property type="match status" value="1"/>
</dbReference>
<dbReference type="PROSITE" id="PS00745">
    <property type="entry name" value="RF_PROK_I"/>
    <property type="match status" value="1"/>
</dbReference>
<feature type="chain" id="PRO_0000263280" description="Peptide chain release factor 1">
    <location>
        <begin position="1"/>
        <end position="353"/>
    </location>
</feature>
<feature type="modified residue" description="N5-methylglutamine" evidence="1">
    <location>
        <position position="230"/>
    </location>
</feature>
<organism>
    <name type="scientific">Gluconobacter oxydans (strain 621H)</name>
    <name type="common">Gluconobacter suboxydans</name>
    <dbReference type="NCBI Taxonomy" id="290633"/>
    <lineage>
        <taxon>Bacteria</taxon>
        <taxon>Pseudomonadati</taxon>
        <taxon>Pseudomonadota</taxon>
        <taxon>Alphaproteobacteria</taxon>
        <taxon>Acetobacterales</taxon>
        <taxon>Acetobacteraceae</taxon>
        <taxon>Gluconobacter</taxon>
    </lineage>
</organism>